<evidence type="ECO:0000255" key="1">
    <source>
        <dbReference type="PROSITE-ProRule" id="PRU00490"/>
    </source>
</evidence>
<evidence type="ECO:0000305" key="2"/>
<feature type="chain" id="PRO_0000089190" description="Macro domain-containing protein DR_2288">
    <location>
        <begin position="1"/>
        <end position="170"/>
    </location>
</feature>
<feature type="domain" description="Macro" evidence="1">
    <location>
        <begin position="1"/>
        <end position="170"/>
    </location>
</feature>
<name>Y2288_DEIRA</name>
<accession>Q9RS39</accession>
<protein>
    <recommendedName>
        <fullName>Macro domain-containing protein DR_2288</fullName>
    </recommendedName>
</protein>
<proteinExistence type="inferred from homology"/>
<gene>
    <name type="ordered locus">DR_2288</name>
</gene>
<sequence>MPLELVQGDIAHQPVDAVVTAANKQLMGGGGVDGVIHRAAGPRLLQAIRPIGGTPTGTAVITPAFDLERQGVKYVIHAVGPIWRGGQHGEAELLAGAYRESLRLGVENGCRSVAFPSISTGVYGYPLDRAAPIALATIQDFLRSHPDLSVRMVLYGADALHVFERALAQL</sequence>
<reference key="1">
    <citation type="journal article" date="1999" name="Science">
        <title>Genome sequence of the radioresistant bacterium Deinococcus radiodurans R1.</title>
        <authorList>
            <person name="White O."/>
            <person name="Eisen J.A."/>
            <person name="Heidelberg J.F."/>
            <person name="Hickey E.K."/>
            <person name="Peterson J.D."/>
            <person name="Dodson R.J."/>
            <person name="Haft D.H."/>
            <person name="Gwinn M.L."/>
            <person name="Nelson W.C."/>
            <person name="Richardson D.L."/>
            <person name="Moffat K.S."/>
            <person name="Qin H."/>
            <person name="Jiang L."/>
            <person name="Pamphile W."/>
            <person name="Crosby M."/>
            <person name="Shen M."/>
            <person name="Vamathevan J.J."/>
            <person name="Lam P."/>
            <person name="McDonald L.A."/>
            <person name="Utterback T.R."/>
            <person name="Zalewski C."/>
            <person name="Makarova K.S."/>
            <person name="Aravind L."/>
            <person name="Daly M.J."/>
            <person name="Minton K.W."/>
            <person name="Fleischmann R.D."/>
            <person name="Ketchum K.A."/>
            <person name="Nelson K.E."/>
            <person name="Salzberg S.L."/>
            <person name="Smith H.O."/>
            <person name="Venter J.C."/>
            <person name="Fraser C.M."/>
        </authorList>
    </citation>
    <scope>NUCLEOTIDE SEQUENCE [LARGE SCALE GENOMIC DNA]</scope>
    <source>
        <strain>ATCC 13939 / DSM 20539 / JCM 16871 / CCUG 27074 / LMG 4051 / NBRC 15346 / NCIMB 9279 / VKM B-1422 / R1</strain>
    </source>
</reference>
<organism>
    <name type="scientific">Deinococcus radiodurans (strain ATCC 13939 / DSM 20539 / JCM 16871 / CCUG 27074 / LMG 4051 / NBRC 15346 / NCIMB 9279 / VKM B-1422 / R1)</name>
    <dbReference type="NCBI Taxonomy" id="243230"/>
    <lineage>
        <taxon>Bacteria</taxon>
        <taxon>Thermotogati</taxon>
        <taxon>Deinococcota</taxon>
        <taxon>Deinococci</taxon>
        <taxon>Deinococcales</taxon>
        <taxon>Deinococcaceae</taxon>
        <taxon>Deinococcus</taxon>
    </lineage>
</organism>
<keyword id="KW-1185">Reference proteome</keyword>
<dbReference type="EMBL" id="AE000513">
    <property type="protein sequence ID" value="AAF11835.1"/>
    <property type="molecule type" value="Genomic_DNA"/>
</dbReference>
<dbReference type="PIR" id="B75291">
    <property type="entry name" value="B75291"/>
</dbReference>
<dbReference type="RefSeq" id="NP_296009.1">
    <property type="nucleotide sequence ID" value="NC_001263.1"/>
</dbReference>
<dbReference type="RefSeq" id="WP_010888916.1">
    <property type="nucleotide sequence ID" value="NC_001263.1"/>
</dbReference>
<dbReference type="SMR" id="Q9RS39"/>
<dbReference type="STRING" id="243230.DR_2288"/>
<dbReference type="PaxDb" id="243230-DR_2288"/>
<dbReference type="EnsemblBacteria" id="AAF11835">
    <property type="protein sequence ID" value="AAF11835"/>
    <property type="gene ID" value="DR_2288"/>
</dbReference>
<dbReference type="GeneID" id="69518540"/>
<dbReference type="KEGG" id="dra:DR_2288"/>
<dbReference type="PATRIC" id="fig|243230.17.peg.2517"/>
<dbReference type="eggNOG" id="COG2110">
    <property type="taxonomic scope" value="Bacteria"/>
</dbReference>
<dbReference type="HOGENOM" id="CLU_046550_5_1_0"/>
<dbReference type="InParanoid" id="Q9RS39"/>
<dbReference type="OrthoDB" id="6194521at2"/>
<dbReference type="Proteomes" id="UP000002524">
    <property type="component" value="Chromosome 1"/>
</dbReference>
<dbReference type="CDD" id="cd02908">
    <property type="entry name" value="Macro_OAADPr_deacetylase"/>
    <property type="match status" value="1"/>
</dbReference>
<dbReference type="Gene3D" id="3.40.220.10">
    <property type="entry name" value="Leucine Aminopeptidase, subunit E, domain 1"/>
    <property type="match status" value="1"/>
</dbReference>
<dbReference type="InterPro" id="IPR002589">
    <property type="entry name" value="Macro_dom"/>
</dbReference>
<dbReference type="InterPro" id="IPR043472">
    <property type="entry name" value="Macro_dom-like"/>
</dbReference>
<dbReference type="PANTHER" id="PTHR11106">
    <property type="entry name" value="GANGLIOSIDE INDUCED DIFFERENTIATION ASSOCIATED PROTEIN 2-RELATED"/>
    <property type="match status" value="1"/>
</dbReference>
<dbReference type="PANTHER" id="PTHR11106:SF27">
    <property type="entry name" value="MACRO DOMAIN-CONTAINING PROTEIN"/>
    <property type="match status" value="1"/>
</dbReference>
<dbReference type="Pfam" id="PF01661">
    <property type="entry name" value="Macro"/>
    <property type="match status" value="1"/>
</dbReference>
<dbReference type="SMART" id="SM00506">
    <property type="entry name" value="A1pp"/>
    <property type="match status" value="1"/>
</dbReference>
<dbReference type="SUPFAM" id="SSF52949">
    <property type="entry name" value="Macro domain-like"/>
    <property type="match status" value="1"/>
</dbReference>
<dbReference type="PROSITE" id="PS51154">
    <property type="entry name" value="MACRO"/>
    <property type="match status" value="1"/>
</dbReference>
<comment type="similarity">
    <text evidence="2">Belongs to the MacroD-type family.</text>
</comment>